<accession>A3CWU4</accession>
<proteinExistence type="inferred from homology"/>
<evidence type="ECO:0000255" key="1">
    <source>
        <dbReference type="HAMAP-Rule" id="MF_00348"/>
    </source>
</evidence>
<comment type="function">
    <text evidence="1">Involved in DNA repair and in homologous recombination. Binds and assemble on single-stranded DNA to form a nucleoprotein filament. Hydrolyzes ATP in a ssDNA-dependent manner and promotes DNA strand exchange between homologous DNA molecules.</text>
</comment>
<comment type="similarity">
    <text evidence="1">Belongs to the eukaryotic RecA-like protein family.</text>
</comment>
<organism>
    <name type="scientific">Methanoculleus marisnigri (strain ATCC 35101 / DSM 1498 / JR1)</name>
    <dbReference type="NCBI Taxonomy" id="368407"/>
    <lineage>
        <taxon>Archaea</taxon>
        <taxon>Methanobacteriati</taxon>
        <taxon>Methanobacteriota</taxon>
        <taxon>Stenosarchaea group</taxon>
        <taxon>Methanomicrobia</taxon>
        <taxon>Methanomicrobiales</taxon>
        <taxon>Methanomicrobiaceae</taxon>
        <taxon>Methanoculleus</taxon>
    </lineage>
</organism>
<reference key="1">
    <citation type="journal article" date="2009" name="Stand. Genomic Sci.">
        <title>Complete genome sequence of Methanoculleus marisnigri Romesser et al. 1981 type strain JR1.</title>
        <authorList>
            <person name="Anderson I.J."/>
            <person name="Sieprawska-Lupa M."/>
            <person name="Lapidus A."/>
            <person name="Nolan M."/>
            <person name="Copeland A."/>
            <person name="Glavina Del Rio T."/>
            <person name="Tice H."/>
            <person name="Dalin E."/>
            <person name="Barry K."/>
            <person name="Saunders E."/>
            <person name="Han C."/>
            <person name="Brettin T."/>
            <person name="Detter J.C."/>
            <person name="Bruce D."/>
            <person name="Mikhailova N."/>
            <person name="Pitluck S."/>
            <person name="Hauser L."/>
            <person name="Land M."/>
            <person name="Lucas S."/>
            <person name="Richardson P."/>
            <person name="Whitman W.B."/>
            <person name="Kyrpides N.C."/>
        </authorList>
    </citation>
    <scope>NUCLEOTIDE SEQUENCE [LARGE SCALE GENOMIC DNA]</scope>
    <source>
        <strain>ATCC 35101 / DSM 1498 / JR1</strain>
    </source>
</reference>
<name>RADA_METMJ</name>
<keyword id="KW-0067">ATP-binding</keyword>
<keyword id="KW-0227">DNA damage</keyword>
<keyword id="KW-0233">DNA recombination</keyword>
<keyword id="KW-0238">DNA-binding</keyword>
<keyword id="KW-0547">Nucleotide-binding</keyword>
<gene>
    <name evidence="1" type="primary">radA</name>
    <name type="ordered locus">Memar_1918</name>
</gene>
<protein>
    <recommendedName>
        <fullName evidence="1">DNA repair and recombination protein RadA</fullName>
    </recommendedName>
</protein>
<sequence>MSEIDLEDLPGVGATTAEKLREAGYGTVESVATATTSDLAEAAEIGEATAKKVILAARKMADIGGFKTGRDILDKRKDIKKLRTLVPEFDELVGGGLETQAITEVYGEFGSGKSQLVHQMAVNAQLPEELGGLGGGVIYVDTENTFRPERIEQMLNGLPEEAEIGEIEEVLERIHVARAHSSDHQMLLLETARELANDLRTSDYPVRLFVIDSLTSLFRSEYAGRGTLAPRQQKLNRHMHDLLKLIDDHNAVGLVTNQVMSNPGILFGDPTKPIGGNIVGHTATFRLYLRKSKGGKRVARLVDSPNLPEGEAAFMVEQAGLKPC</sequence>
<dbReference type="EMBL" id="CP000562">
    <property type="protein sequence ID" value="ABN57844.1"/>
    <property type="molecule type" value="Genomic_DNA"/>
</dbReference>
<dbReference type="RefSeq" id="WP_011844753.1">
    <property type="nucleotide sequence ID" value="NC_009051.1"/>
</dbReference>
<dbReference type="SMR" id="A3CWU4"/>
<dbReference type="STRING" id="368407.Memar_1918"/>
<dbReference type="GeneID" id="4847111"/>
<dbReference type="GeneID" id="76729995"/>
<dbReference type="KEGG" id="mem:Memar_1918"/>
<dbReference type="eggNOG" id="arCOG00415">
    <property type="taxonomic scope" value="Archaea"/>
</dbReference>
<dbReference type="HOGENOM" id="CLU_041732_0_0_2"/>
<dbReference type="OrthoDB" id="31129at2157"/>
<dbReference type="Proteomes" id="UP000002146">
    <property type="component" value="Chromosome"/>
</dbReference>
<dbReference type="GO" id="GO:0005524">
    <property type="term" value="F:ATP binding"/>
    <property type="evidence" value="ECO:0007669"/>
    <property type="project" value="UniProtKB-UniRule"/>
</dbReference>
<dbReference type="GO" id="GO:0016887">
    <property type="term" value="F:ATP hydrolysis activity"/>
    <property type="evidence" value="ECO:0007669"/>
    <property type="project" value="InterPro"/>
</dbReference>
<dbReference type="GO" id="GO:0140664">
    <property type="term" value="F:ATP-dependent DNA damage sensor activity"/>
    <property type="evidence" value="ECO:0007669"/>
    <property type="project" value="InterPro"/>
</dbReference>
<dbReference type="GO" id="GO:0003684">
    <property type="term" value="F:damaged DNA binding"/>
    <property type="evidence" value="ECO:0007669"/>
    <property type="project" value="UniProtKB-UniRule"/>
</dbReference>
<dbReference type="GO" id="GO:0006310">
    <property type="term" value="P:DNA recombination"/>
    <property type="evidence" value="ECO:0007669"/>
    <property type="project" value="UniProtKB-UniRule"/>
</dbReference>
<dbReference type="GO" id="GO:0006281">
    <property type="term" value="P:DNA repair"/>
    <property type="evidence" value="ECO:0007669"/>
    <property type="project" value="UniProtKB-UniRule"/>
</dbReference>
<dbReference type="Gene3D" id="1.10.150.20">
    <property type="entry name" value="5' to 3' exonuclease, C-terminal subdomain"/>
    <property type="match status" value="1"/>
</dbReference>
<dbReference type="Gene3D" id="3.40.50.300">
    <property type="entry name" value="P-loop containing nucleotide triphosphate hydrolases"/>
    <property type="match status" value="1"/>
</dbReference>
<dbReference type="HAMAP" id="MF_00348">
    <property type="entry name" value="RadA_arch"/>
    <property type="match status" value="1"/>
</dbReference>
<dbReference type="InterPro" id="IPR003593">
    <property type="entry name" value="AAA+_ATPase"/>
</dbReference>
<dbReference type="InterPro" id="IPR013632">
    <property type="entry name" value="DNA_recomb/repair_Rad51_C"/>
</dbReference>
<dbReference type="InterPro" id="IPR011938">
    <property type="entry name" value="DNA_recomb/repair_RadA"/>
</dbReference>
<dbReference type="InterPro" id="IPR016467">
    <property type="entry name" value="DNA_recomb/repair_RecA-like"/>
</dbReference>
<dbReference type="InterPro" id="IPR010995">
    <property type="entry name" value="DNA_repair_Rad51/TF_NusA_a-hlx"/>
</dbReference>
<dbReference type="InterPro" id="IPR003583">
    <property type="entry name" value="Hlx-hairpin-Hlx_DNA-bd_motif"/>
</dbReference>
<dbReference type="InterPro" id="IPR027417">
    <property type="entry name" value="P-loop_NTPase"/>
</dbReference>
<dbReference type="InterPro" id="IPR020588">
    <property type="entry name" value="RecA_ATP-bd"/>
</dbReference>
<dbReference type="InterPro" id="IPR020587">
    <property type="entry name" value="RecA_monomer-monomer_interface"/>
</dbReference>
<dbReference type="NCBIfam" id="NF003301">
    <property type="entry name" value="PRK04301.1"/>
    <property type="match status" value="1"/>
</dbReference>
<dbReference type="NCBIfam" id="TIGR02236">
    <property type="entry name" value="recomb_radA"/>
    <property type="match status" value="1"/>
</dbReference>
<dbReference type="PANTHER" id="PTHR22942:SF30">
    <property type="entry name" value="MEIOTIC RECOMBINATION PROTEIN DMC1_LIM15 HOMOLOG"/>
    <property type="match status" value="1"/>
</dbReference>
<dbReference type="PANTHER" id="PTHR22942">
    <property type="entry name" value="RECA/RAD51/RADA DNA STRAND-PAIRING FAMILY MEMBER"/>
    <property type="match status" value="1"/>
</dbReference>
<dbReference type="Pfam" id="PF14520">
    <property type="entry name" value="HHH_5"/>
    <property type="match status" value="1"/>
</dbReference>
<dbReference type="Pfam" id="PF08423">
    <property type="entry name" value="Rad51"/>
    <property type="match status" value="1"/>
</dbReference>
<dbReference type="PIRSF" id="PIRSF005856">
    <property type="entry name" value="Rad51"/>
    <property type="match status" value="1"/>
</dbReference>
<dbReference type="SMART" id="SM00382">
    <property type="entry name" value="AAA"/>
    <property type="match status" value="1"/>
</dbReference>
<dbReference type="SMART" id="SM00278">
    <property type="entry name" value="HhH1"/>
    <property type="match status" value="2"/>
</dbReference>
<dbReference type="SUPFAM" id="SSF52540">
    <property type="entry name" value="P-loop containing nucleoside triphosphate hydrolases"/>
    <property type="match status" value="1"/>
</dbReference>
<dbReference type="SUPFAM" id="SSF47794">
    <property type="entry name" value="Rad51 N-terminal domain-like"/>
    <property type="match status" value="1"/>
</dbReference>
<dbReference type="PROSITE" id="PS50162">
    <property type="entry name" value="RECA_2"/>
    <property type="match status" value="1"/>
</dbReference>
<dbReference type="PROSITE" id="PS50163">
    <property type="entry name" value="RECA_3"/>
    <property type="match status" value="1"/>
</dbReference>
<feature type="chain" id="PRO_1000048389" description="DNA repair and recombination protein RadA">
    <location>
        <begin position="1"/>
        <end position="324"/>
    </location>
</feature>
<feature type="binding site" evidence="1">
    <location>
        <begin position="107"/>
        <end position="114"/>
    </location>
    <ligand>
        <name>ATP</name>
        <dbReference type="ChEBI" id="CHEBI:30616"/>
    </ligand>
</feature>